<gene>
    <name evidence="1" type="primary">lpxB</name>
    <name type="ordered locus">Tcr_1273</name>
</gene>
<name>LPXB_HYDCU</name>
<dbReference type="EC" id="2.4.1.182" evidence="1"/>
<dbReference type="EMBL" id="CP000109">
    <property type="protein sequence ID" value="ABB41868.1"/>
    <property type="molecule type" value="Genomic_DNA"/>
</dbReference>
<dbReference type="SMR" id="Q31G55"/>
<dbReference type="STRING" id="317025.Tcr_1273"/>
<dbReference type="CAZy" id="GT19">
    <property type="family name" value="Glycosyltransferase Family 19"/>
</dbReference>
<dbReference type="KEGG" id="tcx:Tcr_1273"/>
<dbReference type="eggNOG" id="COG0763">
    <property type="taxonomic scope" value="Bacteria"/>
</dbReference>
<dbReference type="HOGENOM" id="CLU_036577_3_0_6"/>
<dbReference type="OrthoDB" id="9801642at2"/>
<dbReference type="UniPathway" id="UPA00973"/>
<dbReference type="GO" id="GO:0016020">
    <property type="term" value="C:membrane"/>
    <property type="evidence" value="ECO:0007669"/>
    <property type="project" value="GOC"/>
</dbReference>
<dbReference type="GO" id="GO:0008915">
    <property type="term" value="F:lipid-A-disaccharide synthase activity"/>
    <property type="evidence" value="ECO:0007669"/>
    <property type="project" value="UniProtKB-UniRule"/>
</dbReference>
<dbReference type="GO" id="GO:0005543">
    <property type="term" value="F:phospholipid binding"/>
    <property type="evidence" value="ECO:0007669"/>
    <property type="project" value="TreeGrafter"/>
</dbReference>
<dbReference type="GO" id="GO:0009245">
    <property type="term" value="P:lipid A biosynthetic process"/>
    <property type="evidence" value="ECO:0007669"/>
    <property type="project" value="UniProtKB-UniRule"/>
</dbReference>
<dbReference type="HAMAP" id="MF_00392">
    <property type="entry name" value="LpxB"/>
    <property type="match status" value="1"/>
</dbReference>
<dbReference type="InterPro" id="IPR003835">
    <property type="entry name" value="Glyco_trans_19"/>
</dbReference>
<dbReference type="NCBIfam" id="TIGR00215">
    <property type="entry name" value="lpxB"/>
    <property type="match status" value="1"/>
</dbReference>
<dbReference type="PANTHER" id="PTHR30372">
    <property type="entry name" value="LIPID-A-DISACCHARIDE SYNTHASE"/>
    <property type="match status" value="1"/>
</dbReference>
<dbReference type="PANTHER" id="PTHR30372:SF4">
    <property type="entry name" value="LIPID-A-DISACCHARIDE SYNTHASE, MITOCHONDRIAL-RELATED"/>
    <property type="match status" value="1"/>
</dbReference>
<dbReference type="Pfam" id="PF02684">
    <property type="entry name" value="LpxB"/>
    <property type="match status" value="1"/>
</dbReference>
<dbReference type="SUPFAM" id="SSF53756">
    <property type="entry name" value="UDP-Glycosyltransferase/glycogen phosphorylase"/>
    <property type="match status" value="1"/>
</dbReference>
<accession>Q31G55</accession>
<keyword id="KW-0328">Glycosyltransferase</keyword>
<keyword id="KW-0441">Lipid A biosynthesis</keyword>
<keyword id="KW-0444">Lipid biosynthesis</keyword>
<keyword id="KW-0443">Lipid metabolism</keyword>
<keyword id="KW-0808">Transferase</keyword>
<comment type="function">
    <text evidence="1">Condensation of UDP-2,3-diacylglucosamine and 2,3-diacylglucosamine-1-phosphate to form lipid A disaccharide, a precursor of lipid A, a phosphorylated glycolipid that anchors the lipopolysaccharide to the outer membrane of the cell.</text>
</comment>
<comment type="catalytic activity">
    <reaction evidence="1">
        <text>a lipid X + a UDP-2-N,3-O-bis[(3R)-3-hydroxyacyl]-alpha-D-glucosamine = a lipid A disaccharide + UDP + H(+)</text>
        <dbReference type="Rhea" id="RHEA:67828"/>
        <dbReference type="ChEBI" id="CHEBI:15378"/>
        <dbReference type="ChEBI" id="CHEBI:58223"/>
        <dbReference type="ChEBI" id="CHEBI:137748"/>
        <dbReference type="ChEBI" id="CHEBI:176338"/>
        <dbReference type="ChEBI" id="CHEBI:176343"/>
        <dbReference type="EC" id="2.4.1.182"/>
    </reaction>
</comment>
<comment type="pathway">
    <text evidence="1">Bacterial outer membrane biogenesis; LPS lipid A biosynthesis.</text>
</comment>
<comment type="similarity">
    <text evidence="1">Belongs to the LpxB family.</text>
</comment>
<feature type="chain" id="PRO_0000255230" description="Lipid-A-disaccharide synthase">
    <location>
        <begin position="1"/>
        <end position="376"/>
    </location>
</feature>
<organism>
    <name type="scientific">Hydrogenovibrio crunogenus (strain DSM 25203 / XCL-2)</name>
    <name type="common">Thiomicrospira crunogena</name>
    <dbReference type="NCBI Taxonomy" id="317025"/>
    <lineage>
        <taxon>Bacteria</taxon>
        <taxon>Pseudomonadati</taxon>
        <taxon>Pseudomonadota</taxon>
        <taxon>Gammaproteobacteria</taxon>
        <taxon>Thiotrichales</taxon>
        <taxon>Piscirickettsiaceae</taxon>
        <taxon>Hydrogenovibrio</taxon>
    </lineage>
</organism>
<sequence length="376" mass="41827">MVAGEASGDTLGADLILSLKKRFPNARFVGIGGQKMIANGFESWYPLEKLSVMGLFEVLKHLPSLLRLRKELIQKLLQLKPDVFIGIDAPDFNFKMEGILKENAIPTIHYVGPSVWAWREKRLLKICKQVDGVLVLFPFETAYYDKYGIPSKFVGHPLTNQVADSPDKHSARQQLGLSSDTPVTGILPGSRSSEINLMIDVYVQVATKLHEAYPQMKFVIPCVNQAAKERVALSISLYGKGIDFILLDQQAQLAMAASDQLIVTSGTATLEAALMQRPLILAIKLHPISYWIMKRLATTKWVGLPNVLAGKCIVPELIQENATVDKIAQTLDKLITDKEMREVQLTEFKKQYDALNQNASELAADAVVKWAKLKND</sequence>
<evidence type="ECO:0000255" key="1">
    <source>
        <dbReference type="HAMAP-Rule" id="MF_00392"/>
    </source>
</evidence>
<protein>
    <recommendedName>
        <fullName evidence="1">Lipid-A-disaccharide synthase</fullName>
        <ecNumber evidence="1">2.4.1.182</ecNumber>
    </recommendedName>
</protein>
<proteinExistence type="inferred from homology"/>
<reference key="1">
    <citation type="journal article" date="2006" name="PLoS Biol.">
        <title>The genome of deep-sea vent chemolithoautotroph Thiomicrospira crunogena XCL-2.</title>
        <authorList>
            <person name="Scott K.M."/>
            <person name="Sievert S.M."/>
            <person name="Abril F.N."/>
            <person name="Ball L.A."/>
            <person name="Barrett C.J."/>
            <person name="Blake R.A."/>
            <person name="Boller A.J."/>
            <person name="Chain P.S.G."/>
            <person name="Clark J.A."/>
            <person name="Davis C.R."/>
            <person name="Detter C."/>
            <person name="Do K.F."/>
            <person name="Dobrinski K.P."/>
            <person name="Faza B.I."/>
            <person name="Fitzpatrick K.A."/>
            <person name="Freyermuth S.K."/>
            <person name="Harmer T.L."/>
            <person name="Hauser L.J."/>
            <person name="Huegler M."/>
            <person name="Kerfeld C.A."/>
            <person name="Klotz M.G."/>
            <person name="Kong W.W."/>
            <person name="Land M."/>
            <person name="Lapidus A."/>
            <person name="Larimer F.W."/>
            <person name="Longo D.L."/>
            <person name="Lucas S."/>
            <person name="Malfatti S.A."/>
            <person name="Massey S.E."/>
            <person name="Martin D.D."/>
            <person name="McCuddin Z."/>
            <person name="Meyer F."/>
            <person name="Moore J.L."/>
            <person name="Ocampo L.H. Jr."/>
            <person name="Paul J.H."/>
            <person name="Paulsen I.T."/>
            <person name="Reep D.K."/>
            <person name="Ren Q."/>
            <person name="Ross R.L."/>
            <person name="Sato P.Y."/>
            <person name="Thomas P."/>
            <person name="Tinkham L.E."/>
            <person name="Zeruth G.T."/>
        </authorList>
    </citation>
    <scope>NUCLEOTIDE SEQUENCE [LARGE SCALE GENOMIC DNA]</scope>
    <source>
        <strain>DSM 25203 / XCL-2</strain>
    </source>
</reference>